<reference key="1">
    <citation type="journal article" date="2001" name="Virology">
        <title>Analysis of the first complete DNA sequence of an invertebrate iridovirus: coding strategy of the genome of Chilo iridescent virus.</title>
        <authorList>
            <person name="Jakob N.J."/>
            <person name="Mueller K."/>
            <person name="Bahr U."/>
            <person name="Darai G."/>
        </authorList>
    </citation>
    <scope>NUCLEOTIDE SEQUENCE [LARGE SCALE GENOMIC DNA]</scope>
</reference>
<reference key="2">
    <citation type="journal article" date="2007" name="Virol. J.">
        <title>Comparative genomic analysis of the family Iridoviridae: re-annotating and defining the core set of iridovirus genes.</title>
        <authorList>
            <person name="Eaton H.E."/>
            <person name="Metcalf J."/>
            <person name="Penny E."/>
            <person name="Tcherepanov V."/>
            <person name="Upton C."/>
            <person name="Brunetti C.R."/>
        </authorList>
    </citation>
    <scope>GENOME REANNOTATION</scope>
</reference>
<keyword id="KW-1185">Reference proteome</keyword>
<gene>
    <name type="ORF">IIV6-196R</name>
</gene>
<organismHost>
    <name type="scientific">Acheta domesticus</name>
    <name type="common">House cricket</name>
    <dbReference type="NCBI Taxonomy" id="6997"/>
</organismHost>
<organismHost>
    <name type="scientific">Chilo suppressalis</name>
    <name type="common">Asiatic rice borer moth</name>
    <dbReference type="NCBI Taxonomy" id="168631"/>
</organismHost>
<organismHost>
    <name type="scientific">Gryllus bimaculatus</name>
    <name type="common">Two-spotted cricket</name>
    <dbReference type="NCBI Taxonomy" id="6999"/>
</organismHost>
<organismHost>
    <name type="scientific">Gryllus campestris</name>
    <dbReference type="NCBI Taxonomy" id="58607"/>
</organismHost>
<organismHost>
    <name type="scientific">Spodoptera frugiperda</name>
    <name type="common">Fall armyworm</name>
    <dbReference type="NCBI Taxonomy" id="7108"/>
</organismHost>
<proteinExistence type="inferred from homology"/>
<evidence type="ECO:0000305" key="1"/>
<name>VF196_IIV6</name>
<feature type="chain" id="PRO_0000378039" description="Uncharacterized protein 196R">
    <location>
        <begin position="1"/>
        <end position="174"/>
    </location>
</feature>
<comment type="similarity">
    <text evidence="1">Belongs to the IIV-6 196R family.</text>
</comment>
<protein>
    <recommendedName>
        <fullName>Uncharacterized protein 196R</fullName>
    </recommendedName>
</protein>
<accession>O55772</accession>
<organism>
    <name type="scientific">Invertebrate iridescent virus 6</name>
    <name type="common">IIV-6</name>
    <name type="synonym">Chilo iridescent virus</name>
    <dbReference type="NCBI Taxonomy" id="176652"/>
    <lineage>
        <taxon>Viruses</taxon>
        <taxon>Varidnaviria</taxon>
        <taxon>Bamfordvirae</taxon>
        <taxon>Nucleocytoviricota</taxon>
        <taxon>Megaviricetes</taxon>
        <taxon>Pimascovirales</taxon>
        <taxon>Iridoviridae</taxon>
        <taxon>Betairidovirinae</taxon>
        <taxon>Iridovirus</taxon>
    </lineage>
</organism>
<dbReference type="EMBL" id="AF303741">
    <property type="protein sequence ID" value="AAB94483.1"/>
    <property type="molecule type" value="Genomic_DNA"/>
</dbReference>
<dbReference type="PIR" id="T03185">
    <property type="entry name" value="T03185"/>
</dbReference>
<dbReference type="RefSeq" id="NP_149659.1">
    <property type="nucleotide sequence ID" value="NC_003038.1"/>
</dbReference>
<dbReference type="SMR" id="O55772"/>
<dbReference type="KEGG" id="vg:1733279"/>
<dbReference type="OrthoDB" id="17452at10239"/>
<dbReference type="Proteomes" id="UP000001359">
    <property type="component" value="Genome"/>
</dbReference>
<dbReference type="CDD" id="cd02947">
    <property type="entry name" value="TRX_family"/>
    <property type="match status" value="1"/>
</dbReference>
<dbReference type="Gene3D" id="3.40.30.10">
    <property type="entry name" value="Glutaredoxin"/>
    <property type="match status" value="1"/>
</dbReference>
<dbReference type="InterPro" id="IPR036249">
    <property type="entry name" value="Thioredoxin-like_sf"/>
</dbReference>
<dbReference type="InterPro" id="IPR017937">
    <property type="entry name" value="Thioredoxin_CS"/>
</dbReference>
<dbReference type="InterPro" id="IPR013766">
    <property type="entry name" value="Thioredoxin_domain"/>
</dbReference>
<dbReference type="Pfam" id="PF00085">
    <property type="entry name" value="Thioredoxin"/>
    <property type="match status" value="1"/>
</dbReference>
<dbReference type="SUPFAM" id="SSF52833">
    <property type="entry name" value="Thioredoxin-like"/>
    <property type="match status" value="1"/>
</dbReference>
<sequence>MSFMLYLDKADFILSQPPPSNNQEKKKILKNRITNSFSLIMFSGNNCTYCQELKPIFKKLVGTIPNCQIGTVNVSLQPELAELSQQTTTPIRYVPLILFYINGTPFKEFGGNYTEDNLRQFVKEVSIKAYEIIGTPQQEEGSISQHSVGKAVSKRVCYLNFDNAYNGTPPPSFD</sequence>